<protein>
    <recommendedName>
        <fullName evidence="1">Photosystem II D2 protein</fullName>
        <shortName evidence="1">PSII D2 protein</shortName>
        <ecNumber evidence="1">1.10.3.9</ecNumber>
    </recommendedName>
    <alternativeName>
        <fullName evidence="1">Photosystem Q(A) protein</fullName>
    </alternativeName>
</protein>
<gene>
    <name evidence="1" type="primary">psbD</name>
</gene>
<comment type="function">
    <text evidence="1">Photosystem II (PSII) is a light-driven water:plastoquinone oxidoreductase that uses light energy to abstract electrons from H(2)O, generating O(2) and a proton gradient subsequently used for ATP formation. It consists of a core antenna complex that captures photons, and an electron transfer chain that converts photonic excitation into a charge separation. The D1/D2 (PsbA/PsbD) reaction center heterodimer binds P680, the primary electron donor of PSII as well as several subsequent electron acceptors. D2 is needed for assembly of a stable PSII complex.</text>
</comment>
<comment type="catalytic activity">
    <reaction evidence="1">
        <text>2 a plastoquinone + 4 hnu + 2 H2O = 2 a plastoquinol + O2</text>
        <dbReference type="Rhea" id="RHEA:36359"/>
        <dbReference type="Rhea" id="RHEA-COMP:9561"/>
        <dbReference type="Rhea" id="RHEA-COMP:9562"/>
        <dbReference type="ChEBI" id="CHEBI:15377"/>
        <dbReference type="ChEBI" id="CHEBI:15379"/>
        <dbReference type="ChEBI" id="CHEBI:17757"/>
        <dbReference type="ChEBI" id="CHEBI:30212"/>
        <dbReference type="ChEBI" id="CHEBI:62192"/>
        <dbReference type="EC" id="1.10.3.9"/>
    </reaction>
</comment>
<comment type="cofactor">
    <text evidence="1">The D1/D2 heterodimer binds P680, chlorophylls that are the primary electron donor of PSII, and subsequent electron acceptors. It shares a non-heme iron and each subunit binds pheophytin, quinone, additional chlorophylls, carotenoids and lipids. There is also a Cl(-1) ion associated with D1 and D2, which is required for oxygen evolution. The PSII complex binds additional chlorophylls, carotenoids and specific lipids.</text>
</comment>
<comment type="subunit">
    <text evidence="1">PSII is composed of 1 copy each of membrane proteins PsbA, PsbB, PsbC, PsbD, PsbE, PsbF, PsbH, PsbI, PsbJ, PsbK, PsbL, PsbM, PsbT, PsbX, PsbY, PsbZ, Psb30/Ycf12, at least 3 peripheral proteins of the oxygen-evolving complex and a large number of cofactors. It forms dimeric complexes.</text>
</comment>
<comment type="subcellular location">
    <subcellularLocation>
        <location evidence="1">Plastid</location>
        <location evidence="1">Chloroplast thylakoid membrane</location>
        <topology evidence="1">Multi-pass membrane protein</topology>
    </subcellularLocation>
</comment>
<comment type="miscellaneous">
    <text evidence="1">2 of the reaction center chlorophylls (ChlD1 and ChlD2) are entirely coordinated by water.</text>
</comment>
<comment type="similarity">
    <text evidence="1">Belongs to the reaction center PufL/M/PsbA/D family.</text>
</comment>
<feature type="chain" id="PRO_0000359709" description="Photosystem II D2 protein">
    <location>
        <begin position="1"/>
        <end position="351"/>
    </location>
</feature>
<feature type="transmembrane region" description="Helical" evidence="1">
    <location>
        <begin position="39"/>
        <end position="59"/>
    </location>
</feature>
<feature type="transmembrane region" description="Helical" evidence="1">
    <location>
        <begin position="123"/>
        <end position="139"/>
    </location>
</feature>
<feature type="transmembrane region" description="Helical" evidence="1">
    <location>
        <begin position="151"/>
        <end position="164"/>
    </location>
</feature>
<feature type="transmembrane region" description="Helical" evidence="1">
    <location>
        <begin position="206"/>
        <end position="226"/>
    </location>
</feature>
<feature type="transmembrane region" description="Helical" evidence="1">
    <location>
        <begin position="277"/>
        <end position="293"/>
    </location>
</feature>
<feature type="binding site" description="axial binding residue" evidence="1">
    <location>
        <position position="116"/>
    </location>
    <ligand>
        <name>chlorophyll a</name>
        <dbReference type="ChEBI" id="CHEBI:58416"/>
        <label>ChlzD2</label>
    </ligand>
    <ligandPart>
        <name>Mg</name>
        <dbReference type="ChEBI" id="CHEBI:25107"/>
    </ligandPart>
</feature>
<feature type="binding site" evidence="1">
    <location>
        <position position="128"/>
    </location>
    <ligand>
        <name>pheophytin a</name>
        <dbReference type="ChEBI" id="CHEBI:136840"/>
        <label>D2</label>
    </ligand>
</feature>
<feature type="binding site" evidence="1">
    <location>
        <position position="141"/>
    </location>
    <ligand>
        <name>pheophytin a</name>
        <dbReference type="ChEBI" id="CHEBI:136840"/>
        <label>D2</label>
    </ligand>
</feature>
<feature type="binding site" description="axial binding residue" evidence="1">
    <location>
        <position position="196"/>
    </location>
    <ligand>
        <name>chlorophyll a</name>
        <dbReference type="ChEBI" id="CHEBI:58416"/>
        <label>PD2</label>
    </ligand>
    <ligandPart>
        <name>Mg</name>
        <dbReference type="ChEBI" id="CHEBI:25107"/>
    </ligandPart>
</feature>
<feature type="binding site" evidence="1">
    <location>
        <position position="213"/>
    </location>
    <ligand>
        <name>a plastoquinone</name>
        <dbReference type="ChEBI" id="CHEBI:17757"/>
        <label>Q(A)</label>
    </ligand>
</feature>
<feature type="binding site" evidence="1">
    <location>
        <position position="213"/>
    </location>
    <ligand>
        <name>Fe cation</name>
        <dbReference type="ChEBI" id="CHEBI:24875"/>
        <note>ligand shared with heterodimeric partner</note>
    </ligand>
</feature>
<feature type="binding site" evidence="1">
    <location>
        <position position="260"/>
    </location>
    <ligand>
        <name>a plastoquinone</name>
        <dbReference type="ChEBI" id="CHEBI:17757"/>
        <label>Q(A)</label>
    </ligand>
</feature>
<feature type="binding site" evidence="1">
    <location>
        <position position="267"/>
    </location>
    <ligand>
        <name>Fe cation</name>
        <dbReference type="ChEBI" id="CHEBI:24875"/>
        <note>ligand shared with heterodimeric partner</note>
    </ligand>
</feature>
<feature type="helix" evidence="2">
    <location>
        <begin position="13"/>
        <end position="21"/>
    </location>
</feature>
<feature type="strand" evidence="2">
    <location>
        <begin position="25"/>
        <end position="27"/>
    </location>
</feature>
<feature type="turn" evidence="2">
    <location>
        <begin position="30"/>
        <end position="32"/>
    </location>
</feature>
<feature type="helix" evidence="2">
    <location>
        <begin position="33"/>
        <end position="53"/>
    </location>
</feature>
<feature type="turn" evidence="2">
    <location>
        <begin position="57"/>
        <end position="59"/>
    </location>
</feature>
<feature type="strand" evidence="2">
    <location>
        <begin position="60"/>
        <end position="62"/>
    </location>
</feature>
<feature type="turn" evidence="2">
    <location>
        <begin position="66"/>
        <end position="69"/>
    </location>
</feature>
<feature type="turn" evidence="2">
    <location>
        <begin position="72"/>
        <end position="74"/>
    </location>
</feature>
<feature type="turn" evidence="2">
    <location>
        <begin position="94"/>
        <end position="96"/>
    </location>
</feature>
<feature type="helix" evidence="2">
    <location>
        <begin position="100"/>
        <end position="106"/>
    </location>
</feature>
<feature type="helix" evidence="2">
    <location>
        <begin position="108"/>
        <end position="135"/>
    </location>
</feature>
<feature type="helix" evidence="2">
    <location>
        <begin position="140"/>
        <end position="162"/>
    </location>
</feature>
<feature type="helix" evidence="2">
    <location>
        <begin position="166"/>
        <end position="168"/>
    </location>
</feature>
<feature type="helix" evidence="2">
    <location>
        <begin position="174"/>
        <end position="188"/>
    </location>
</feature>
<feature type="helix" evidence="2">
    <location>
        <begin position="190"/>
        <end position="192"/>
    </location>
</feature>
<feature type="helix" evidence="2">
    <location>
        <begin position="194"/>
        <end position="218"/>
    </location>
</feature>
<feature type="strand" evidence="2">
    <location>
        <begin position="220"/>
        <end position="222"/>
    </location>
</feature>
<feature type="strand" evidence="2">
    <location>
        <begin position="226"/>
        <end position="228"/>
    </location>
</feature>
<feature type="helix" evidence="2">
    <location>
        <begin position="230"/>
        <end position="232"/>
    </location>
</feature>
<feature type="helix" evidence="2">
    <location>
        <begin position="245"/>
        <end position="255"/>
    </location>
</feature>
<feature type="helix" evidence="2">
    <location>
        <begin position="263"/>
        <end position="288"/>
    </location>
</feature>
<feature type="turn" evidence="2">
    <location>
        <begin position="289"/>
        <end position="291"/>
    </location>
</feature>
<feature type="helix" evidence="2">
    <location>
        <begin position="298"/>
        <end position="306"/>
    </location>
</feature>
<feature type="helix" evidence="2">
    <location>
        <begin position="313"/>
        <end position="332"/>
    </location>
</feature>
<feature type="helix" evidence="2">
    <location>
        <begin position="334"/>
        <end position="336"/>
    </location>
</feature>
<feature type="turn" evidence="2">
    <location>
        <begin position="342"/>
        <end position="344"/>
    </location>
</feature>
<keyword id="KW-0002">3D-structure</keyword>
<keyword id="KW-0148">Chlorophyll</keyword>
<keyword id="KW-0150">Chloroplast</keyword>
<keyword id="KW-0157">Chromophore</keyword>
<keyword id="KW-0249">Electron transport</keyword>
<keyword id="KW-0408">Iron</keyword>
<keyword id="KW-0460">Magnesium</keyword>
<keyword id="KW-0472">Membrane</keyword>
<keyword id="KW-0479">Metal-binding</keyword>
<keyword id="KW-0560">Oxidoreductase</keyword>
<keyword id="KW-0602">Photosynthesis</keyword>
<keyword id="KW-0604">Photosystem II</keyword>
<keyword id="KW-0934">Plastid</keyword>
<keyword id="KW-0793">Thylakoid</keyword>
<keyword id="KW-0812">Transmembrane</keyword>
<keyword id="KW-1133">Transmembrane helix</keyword>
<keyword id="KW-0813">Transport</keyword>
<reference key="1">
    <citation type="journal article" date="2007" name="Mol. Genet. Genomics">
        <title>Chloroplast genomes of the diatoms Phaeodactylum tricornutum and Thalassiosira pseudonana: comparison with other plastid genomes of the red lineage.</title>
        <authorList>
            <person name="Oudot-Le Secq M.-P."/>
            <person name="Grimwood J."/>
            <person name="Shapiro H."/>
            <person name="Armbrust E.V."/>
            <person name="Bowler C."/>
            <person name="Green B.R."/>
        </authorList>
    </citation>
    <scope>NUCLEOTIDE SEQUENCE [LARGE SCALE GENOMIC DNA]</scope>
    <source>
        <strain>CCMP1335 / NEPCC58 / CCAP 1085/12</strain>
    </source>
</reference>
<accession>A0T0T0</accession>
<evidence type="ECO:0000255" key="1">
    <source>
        <dbReference type="HAMAP-Rule" id="MF_01383"/>
    </source>
</evidence>
<evidence type="ECO:0007829" key="2">
    <source>
        <dbReference type="PDB" id="8IWH"/>
    </source>
</evidence>
<geneLocation type="chloroplast"/>
<organism>
    <name type="scientific">Thalassiosira pseudonana</name>
    <name type="common">Marine diatom</name>
    <name type="synonym">Cyclotella nana</name>
    <dbReference type="NCBI Taxonomy" id="35128"/>
    <lineage>
        <taxon>Eukaryota</taxon>
        <taxon>Sar</taxon>
        <taxon>Stramenopiles</taxon>
        <taxon>Ochrophyta</taxon>
        <taxon>Bacillariophyta</taxon>
        <taxon>Coscinodiscophyceae</taxon>
        <taxon>Thalassiosirophycidae</taxon>
        <taxon>Thalassiosirales</taxon>
        <taxon>Thalassiosiraceae</taxon>
        <taxon>Thalassiosira</taxon>
    </lineage>
</organism>
<proteinExistence type="evidence at protein level"/>
<sequence length="351" mass="39064">MTIAIGQNQERGLFDLVDDWLKRDRFVFVGWSGILLFPTAYLAAGGWFTGTTFVTSWYTHGLASSYLEGCNFLTAAVSTPANSMGHSLLLLWGPEAQGDFTRWCQIGGLWAFIALHGAFGLIGFCLRQFEIARLVGIRPYNAIAFSGPIAVFVSVFLLYPLGQASWFFAPSFGVAAIFRFLLFLQGFHNWTLNPFHMMGVAGILGGALLCAIHGATVENTLFEDGDAANTFRAFTPTQSEETYSMVTANRFWSQIFGVAFSNKRWLHFFMLFVPVAGLWTSSIGIVGLALNLRAYDFVSQELRAAEDPEFETFYTKNILLNEGIRSWMAAQDQPHENFVFPEEVLPRGNAL</sequence>
<name>PSBD_THAPS</name>
<dbReference type="EC" id="1.10.3.9" evidence="1"/>
<dbReference type="EMBL" id="EF067921">
    <property type="protein sequence ID" value="ABK20765.1"/>
    <property type="molecule type" value="Genomic_DNA"/>
</dbReference>
<dbReference type="RefSeq" id="YP_874542.1">
    <property type="nucleotide sequence ID" value="NC_008589.1"/>
</dbReference>
<dbReference type="PDB" id="8IWH">
    <property type="method" value="EM"/>
    <property type="resolution" value="2.68 A"/>
    <property type="chains" value="D/d=1-351"/>
</dbReference>
<dbReference type="PDBsum" id="8IWH"/>
<dbReference type="EMDB" id="EMD-35766"/>
<dbReference type="SMR" id="A0T0T0"/>
<dbReference type="STRING" id="35128.A0T0T0"/>
<dbReference type="GeneID" id="4524785"/>
<dbReference type="InParanoid" id="A0T0T0"/>
<dbReference type="GO" id="GO:0009535">
    <property type="term" value="C:chloroplast thylakoid membrane"/>
    <property type="evidence" value="ECO:0007669"/>
    <property type="project" value="UniProtKB-SubCell"/>
</dbReference>
<dbReference type="GO" id="GO:0009523">
    <property type="term" value="C:photosystem II"/>
    <property type="evidence" value="ECO:0000318"/>
    <property type="project" value="GO_Central"/>
</dbReference>
<dbReference type="GO" id="GO:0016168">
    <property type="term" value="F:chlorophyll binding"/>
    <property type="evidence" value="ECO:0007669"/>
    <property type="project" value="UniProtKB-UniRule"/>
</dbReference>
<dbReference type="GO" id="GO:0045156">
    <property type="term" value="F:electron transporter, transferring electrons within the cyclic electron transport pathway of photosynthesis activity"/>
    <property type="evidence" value="ECO:0007669"/>
    <property type="project" value="InterPro"/>
</dbReference>
<dbReference type="GO" id="GO:0005506">
    <property type="term" value="F:iron ion binding"/>
    <property type="evidence" value="ECO:0007669"/>
    <property type="project" value="UniProtKB-UniRule"/>
</dbReference>
<dbReference type="GO" id="GO:0016491">
    <property type="term" value="F:oxidoreductase activity"/>
    <property type="evidence" value="ECO:0007669"/>
    <property type="project" value="UniProtKB-KW"/>
</dbReference>
<dbReference type="GO" id="GO:0009772">
    <property type="term" value="P:photosynthetic electron transport in photosystem II"/>
    <property type="evidence" value="ECO:0007669"/>
    <property type="project" value="InterPro"/>
</dbReference>
<dbReference type="CDD" id="cd09288">
    <property type="entry name" value="Photosystem-II_D2"/>
    <property type="match status" value="1"/>
</dbReference>
<dbReference type="FunFam" id="1.20.85.10:FF:000001">
    <property type="entry name" value="photosystem II D2 protein-like"/>
    <property type="match status" value="1"/>
</dbReference>
<dbReference type="Gene3D" id="1.20.85.10">
    <property type="entry name" value="Photosystem II protein D1-like"/>
    <property type="match status" value="1"/>
</dbReference>
<dbReference type="HAMAP" id="MF_01383">
    <property type="entry name" value="PSII_PsbD_D2"/>
    <property type="match status" value="1"/>
</dbReference>
<dbReference type="InterPro" id="IPR055266">
    <property type="entry name" value="D1/D2"/>
</dbReference>
<dbReference type="InterPro" id="IPR036854">
    <property type="entry name" value="Photo_II_D1/D2_sf"/>
</dbReference>
<dbReference type="InterPro" id="IPR000484">
    <property type="entry name" value="Photo_RC_L/M"/>
</dbReference>
<dbReference type="InterPro" id="IPR055265">
    <property type="entry name" value="Photo_RC_L/M_CS"/>
</dbReference>
<dbReference type="InterPro" id="IPR005868">
    <property type="entry name" value="PSII_PsbD/D2"/>
</dbReference>
<dbReference type="NCBIfam" id="TIGR01152">
    <property type="entry name" value="psbD"/>
    <property type="match status" value="1"/>
</dbReference>
<dbReference type="PANTHER" id="PTHR33149:SF12">
    <property type="entry name" value="PHOTOSYSTEM II D2 PROTEIN"/>
    <property type="match status" value="1"/>
</dbReference>
<dbReference type="PANTHER" id="PTHR33149">
    <property type="entry name" value="PHOTOSYSTEM II PROTEIN D1"/>
    <property type="match status" value="1"/>
</dbReference>
<dbReference type="Pfam" id="PF00124">
    <property type="entry name" value="Photo_RC"/>
    <property type="match status" value="1"/>
</dbReference>
<dbReference type="PRINTS" id="PR00256">
    <property type="entry name" value="REACTNCENTRE"/>
</dbReference>
<dbReference type="SUPFAM" id="SSF81483">
    <property type="entry name" value="Bacterial photosystem II reaction centre, L and M subunits"/>
    <property type="match status" value="1"/>
</dbReference>
<dbReference type="PROSITE" id="PS00244">
    <property type="entry name" value="REACTION_CENTER"/>
    <property type="match status" value="1"/>
</dbReference>